<accession>B4F0X6</accession>
<proteinExistence type="inferred from homology"/>
<reference key="1">
    <citation type="journal article" date="2008" name="J. Bacteriol.">
        <title>Complete genome sequence of uropathogenic Proteus mirabilis, a master of both adherence and motility.</title>
        <authorList>
            <person name="Pearson M.M."/>
            <person name="Sebaihia M."/>
            <person name="Churcher C."/>
            <person name="Quail M.A."/>
            <person name="Seshasayee A.S."/>
            <person name="Luscombe N.M."/>
            <person name="Abdellah Z."/>
            <person name="Arrosmith C."/>
            <person name="Atkin B."/>
            <person name="Chillingworth T."/>
            <person name="Hauser H."/>
            <person name="Jagels K."/>
            <person name="Moule S."/>
            <person name="Mungall K."/>
            <person name="Norbertczak H."/>
            <person name="Rabbinowitsch E."/>
            <person name="Walker D."/>
            <person name="Whithead S."/>
            <person name="Thomson N.R."/>
            <person name="Rather P.N."/>
            <person name="Parkhill J."/>
            <person name="Mobley H.L.T."/>
        </authorList>
    </citation>
    <scope>NUCLEOTIDE SEQUENCE [LARGE SCALE GENOMIC DNA]</scope>
    <source>
        <strain>HI4320</strain>
    </source>
</reference>
<name>FPG_PROMH</name>
<feature type="initiator methionine" description="Removed" evidence="1">
    <location>
        <position position="1"/>
    </location>
</feature>
<feature type="chain" id="PRO_1000094063" description="Formamidopyrimidine-DNA glycosylase">
    <location>
        <begin position="2"/>
        <end position="274"/>
    </location>
</feature>
<feature type="zinc finger region" description="FPG-type" evidence="2">
    <location>
        <begin position="235"/>
        <end position="269"/>
    </location>
</feature>
<feature type="active site" description="Schiff-base intermediate with DNA" evidence="2">
    <location>
        <position position="2"/>
    </location>
</feature>
<feature type="active site" description="Proton donor" evidence="2">
    <location>
        <position position="3"/>
    </location>
</feature>
<feature type="active site" description="Proton donor; for beta-elimination activity" evidence="2">
    <location>
        <position position="57"/>
    </location>
</feature>
<feature type="active site" description="Proton donor; for delta-elimination activity" evidence="2">
    <location>
        <position position="259"/>
    </location>
</feature>
<feature type="binding site" evidence="2">
    <location>
        <position position="90"/>
    </location>
    <ligand>
        <name>DNA</name>
        <dbReference type="ChEBI" id="CHEBI:16991"/>
    </ligand>
</feature>
<feature type="binding site" evidence="2">
    <location>
        <position position="109"/>
    </location>
    <ligand>
        <name>DNA</name>
        <dbReference type="ChEBI" id="CHEBI:16991"/>
    </ligand>
</feature>
<feature type="binding site" evidence="2">
    <location>
        <position position="150"/>
    </location>
    <ligand>
        <name>DNA</name>
        <dbReference type="ChEBI" id="CHEBI:16991"/>
    </ligand>
</feature>
<evidence type="ECO:0000250" key="1"/>
<evidence type="ECO:0000255" key="2">
    <source>
        <dbReference type="HAMAP-Rule" id="MF_00103"/>
    </source>
</evidence>
<sequence length="274" mass="31128">MPELPEVETSRRGIEPHLVGNILHYAIVRNSKLRWPVSEKIKTLLDEPILSVKRRAKYLLIELNQGWIIVHLGMSGSVRILPEEQPEEKHDHIDLVFRDGKVLRYTDPRRFGAWLWCEDLATSSVLAHLGPEPLSAQFNAQYLYQQSKNKKIAIKPWLMDNKLVVGVGNIYANEALFSSGIMPDRKASSLTEQECDVLVNAIKTVLTRSIEQGGTTLKDFLQSDGKPGYFAQELFVYGRKDKACLICGHTIESIKQGQRSTFFCRHCQHGEITD</sequence>
<protein>
    <recommendedName>
        <fullName evidence="2">Formamidopyrimidine-DNA glycosylase</fullName>
        <shortName evidence="2">Fapy-DNA glycosylase</shortName>
        <ecNumber evidence="2">3.2.2.23</ecNumber>
    </recommendedName>
    <alternativeName>
        <fullName evidence="2">DNA-(apurinic or apyrimidinic site) lyase MutM</fullName>
        <shortName evidence="2">AP lyase MutM</shortName>
        <ecNumber evidence="2">4.2.99.18</ecNumber>
    </alternativeName>
</protein>
<keyword id="KW-0227">DNA damage</keyword>
<keyword id="KW-0234">DNA repair</keyword>
<keyword id="KW-0238">DNA-binding</keyword>
<keyword id="KW-0326">Glycosidase</keyword>
<keyword id="KW-0378">Hydrolase</keyword>
<keyword id="KW-0456">Lyase</keyword>
<keyword id="KW-0479">Metal-binding</keyword>
<keyword id="KW-0511">Multifunctional enzyme</keyword>
<keyword id="KW-1185">Reference proteome</keyword>
<keyword id="KW-0862">Zinc</keyword>
<keyword id="KW-0863">Zinc-finger</keyword>
<gene>
    <name evidence="2" type="primary">mutM</name>
    <name evidence="2" type="synonym">fpg</name>
    <name type="ordered locus">PMI3164</name>
</gene>
<organism>
    <name type="scientific">Proteus mirabilis (strain HI4320)</name>
    <dbReference type="NCBI Taxonomy" id="529507"/>
    <lineage>
        <taxon>Bacteria</taxon>
        <taxon>Pseudomonadati</taxon>
        <taxon>Pseudomonadota</taxon>
        <taxon>Gammaproteobacteria</taxon>
        <taxon>Enterobacterales</taxon>
        <taxon>Morganellaceae</taxon>
        <taxon>Proteus</taxon>
    </lineage>
</organism>
<dbReference type="EC" id="3.2.2.23" evidence="2"/>
<dbReference type="EC" id="4.2.99.18" evidence="2"/>
<dbReference type="EMBL" id="AM942759">
    <property type="protein sequence ID" value="CAR46215.1"/>
    <property type="molecule type" value="Genomic_DNA"/>
</dbReference>
<dbReference type="RefSeq" id="WP_004249937.1">
    <property type="nucleotide sequence ID" value="NC_010554.1"/>
</dbReference>
<dbReference type="SMR" id="B4F0X6"/>
<dbReference type="EnsemblBacteria" id="CAR46215">
    <property type="protein sequence ID" value="CAR46215"/>
    <property type="gene ID" value="PMI3164"/>
</dbReference>
<dbReference type="GeneID" id="6801900"/>
<dbReference type="KEGG" id="pmr:PMI3164"/>
<dbReference type="eggNOG" id="COG0266">
    <property type="taxonomic scope" value="Bacteria"/>
</dbReference>
<dbReference type="HOGENOM" id="CLU_038423_1_1_6"/>
<dbReference type="Proteomes" id="UP000008319">
    <property type="component" value="Chromosome"/>
</dbReference>
<dbReference type="GO" id="GO:0034039">
    <property type="term" value="F:8-oxo-7,8-dihydroguanine DNA N-glycosylase activity"/>
    <property type="evidence" value="ECO:0007669"/>
    <property type="project" value="TreeGrafter"/>
</dbReference>
<dbReference type="GO" id="GO:0140078">
    <property type="term" value="F:class I DNA-(apurinic or apyrimidinic site) endonuclease activity"/>
    <property type="evidence" value="ECO:0007669"/>
    <property type="project" value="UniProtKB-EC"/>
</dbReference>
<dbReference type="GO" id="GO:0003684">
    <property type="term" value="F:damaged DNA binding"/>
    <property type="evidence" value="ECO:0007669"/>
    <property type="project" value="InterPro"/>
</dbReference>
<dbReference type="GO" id="GO:0008270">
    <property type="term" value="F:zinc ion binding"/>
    <property type="evidence" value="ECO:0007669"/>
    <property type="project" value="UniProtKB-UniRule"/>
</dbReference>
<dbReference type="GO" id="GO:0006284">
    <property type="term" value="P:base-excision repair"/>
    <property type="evidence" value="ECO:0007669"/>
    <property type="project" value="InterPro"/>
</dbReference>
<dbReference type="CDD" id="cd08966">
    <property type="entry name" value="EcFpg-like_N"/>
    <property type="match status" value="1"/>
</dbReference>
<dbReference type="FunFam" id="1.10.8.50:FF:000003">
    <property type="entry name" value="Formamidopyrimidine-DNA glycosylase"/>
    <property type="match status" value="1"/>
</dbReference>
<dbReference type="FunFam" id="3.20.190.10:FF:000001">
    <property type="entry name" value="Formamidopyrimidine-DNA glycosylase"/>
    <property type="match status" value="1"/>
</dbReference>
<dbReference type="Gene3D" id="1.10.8.50">
    <property type="match status" value="1"/>
</dbReference>
<dbReference type="Gene3D" id="3.20.190.10">
    <property type="entry name" value="MutM-like, N-terminal"/>
    <property type="match status" value="1"/>
</dbReference>
<dbReference type="HAMAP" id="MF_00103">
    <property type="entry name" value="Fapy_DNA_glycosyl"/>
    <property type="match status" value="1"/>
</dbReference>
<dbReference type="InterPro" id="IPR015886">
    <property type="entry name" value="DNA_glyclase/AP_lyase_DNA-bd"/>
</dbReference>
<dbReference type="InterPro" id="IPR015887">
    <property type="entry name" value="DNA_glyclase_Znf_dom_DNA_BS"/>
</dbReference>
<dbReference type="InterPro" id="IPR020629">
    <property type="entry name" value="Formamido-pyr_DNA_Glyclase"/>
</dbReference>
<dbReference type="InterPro" id="IPR012319">
    <property type="entry name" value="FPG_cat"/>
</dbReference>
<dbReference type="InterPro" id="IPR035937">
    <property type="entry name" value="MutM-like_N-ter"/>
</dbReference>
<dbReference type="InterPro" id="IPR010979">
    <property type="entry name" value="Ribosomal_uS13-like_H2TH"/>
</dbReference>
<dbReference type="InterPro" id="IPR000214">
    <property type="entry name" value="Znf_DNA_glyclase/AP_lyase"/>
</dbReference>
<dbReference type="InterPro" id="IPR010663">
    <property type="entry name" value="Znf_FPG/IleRS"/>
</dbReference>
<dbReference type="NCBIfam" id="TIGR00577">
    <property type="entry name" value="fpg"/>
    <property type="match status" value="1"/>
</dbReference>
<dbReference type="NCBIfam" id="NF002211">
    <property type="entry name" value="PRK01103.1"/>
    <property type="match status" value="1"/>
</dbReference>
<dbReference type="PANTHER" id="PTHR22993">
    <property type="entry name" value="FORMAMIDOPYRIMIDINE-DNA GLYCOSYLASE"/>
    <property type="match status" value="1"/>
</dbReference>
<dbReference type="PANTHER" id="PTHR22993:SF9">
    <property type="entry name" value="FORMAMIDOPYRIMIDINE-DNA GLYCOSYLASE"/>
    <property type="match status" value="1"/>
</dbReference>
<dbReference type="Pfam" id="PF01149">
    <property type="entry name" value="Fapy_DNA_glyco"/>
    <property type="match status" value="1"/>
</dbReference>
<dbReference type="Pfam" id="PF06831">
    <property type="entry name" value="H2TH"/>
    <property type="match status" value="1"/>
</dbReference>
<dbReference type="Pfam" id="PF06827">
    <property type="entry name" value="zf-FPG_IleRS"/>
    <property type="match status" value="1"/>
</dbReference>
<dbReference type="SMART" id="SM00898">
    <property type="entry name" value="Fapy_DNA_glyco"/>
    <property type="match status" value="1"/>
</dbReference>
<dbReference type="SMART" id="SM01232">
    <property type="entry name" value="H2TH"/>
    <property type="match status" value="1"/>
</dbReference>
<dbReference type="SUPFAM" id="SSF57716">
    <property type="entry name" value="Glucocorticoid receptor-like (DNA-binding domain)"/>
    <property type="match status" value="1"/>
</dbReference>
<dbReference type="SUPFAM" id="SSF81624">
    <property type="entry name" value="N-terminal domain of MutM-like DNA repair proteins"/>
    <property type="match status" value="1"/>
</dbReference>
<dbReference type="SUPFAM" id="SSF46946">
    <property type="entry name" value="S13-like H2TH domain"/>
    <property type="match status" value="1"/>
</dbReference>
<dbReference type="PROSITE" id="PS51068">
    <property type="entry name" value="FPG_CAT"/>
    <property type="match status" value="1"/>
</dbReference>
<dbReference type="PROSITE" id="PS01242">
    <property type="entry name" value="ZF_FPG_1"/>
    <property type="match status" value="1"/>
</dbReference>
<dbReference type="PROSITE" id="PS51066">
    <property type="entry name" value="ZF_FPG_2"/>
    <property type="match status" value="1"/>
</dbReference>
<comment type="function">
    <text evidence="2">Involved in base excision repair of DNA damaged by oxidation or by mutagenic agents. Acts as a DNA glycosylase that recognizes and removes damaged bases. Has a preference for oxidized purines, such as 7,8-dihydro-8-oxoguanine (8-oxoG). Has AP (apurinic/apyrimidinic) lyase activity and introduces nicks in the DNA strand. Cleaves the DNA backbone by beta-delta elimination to generate a single-strand break at the site of the removed base with both 3'- and 5'-phosphates.</text>
</comment>
<comment type="catalytic activity">
    <reaction evidence="2">
        <text>Hydrolysis of DNA containing ring-opened 7-methylguanine residues, releasing 2,6-diamino-4-hydroxy-5-(N-methyl)formamidopyrimidine.</text>
        <dbReference type="EC" id="3.2.2.23"/>
    </reaction>
</comment>
<comment type="catalytic activity">
    <reaction evidence="2">
        <text>2'-deoxyribonucleotide-(2'-deoxyribose 5'-phosphate)-2'-deoxyribonucleotide-DNA = a 3'-end 2'-deoxyribonucleotide-(2,3-dehydro-2,3-deoxyribose 5'-phosphate)-DNA + a 5'-end 5'-phospho-2'-deoxyribonucleoside-DNA + H(+)</text>
        <dbReference type="Rhea" id="RHEA:66592"/>
        <dbReference type="Rhea" id="RHEA-COMP:13180"/>
        <dbReference type="Rhea" id="RHEA-COMP:16897"/>
        <dbReference type="Rhea" id="RHEA-COMP:17067"/>
        <dbReference type="ChEBI" id="CHEBI:15378"/>
        <dbReference type="ChEBI" id="CHEBI:136412"/>
        <dbReference type="ChEBI" id="CHEBI:157695"/>
        <dbReference type="ChEBI" id="CHEBI:167181"/>
        <dbReference type="EC" id="4.2.99.18"/>
    </reaction>
</comment>
<comment type="cofactor">
    <cofactor evidence="2">
        <name>Zn(2+)</name>
        <dbReference type="ChEBI" id="CHEBI:29105"/>
    </cofactor>
    <text evidence="2">Binds 1 zinc ion per subunit.</text>
</comment>
<comment type="subunit">
    <text evidence="2">Monomer.</text>
</comment>
<comment type="similarity">
    <text evidence="2">Belongs to the FPG family.</text>
</comment>